<protein>
    <recommendedName>
        <fullName evidence="1">Large ribosomal subunit protein uL22</fullName>
    </recommendedName>
    <alternativeName>
        <fullName evidence="2">50S ribosomal protein L22</fullName>
    </alternativeName>
</protein>
<organism>
    <name type="scientific">Xanthomonas axonopodis pv. citri (strain 306)</name>
    <dbReference type="NCBI Taxonomy" id="190486"/>
    <lineage>
        <taxon>Bacteria</taxon>
        <taxon>Pseudomonadati</taxon>
        <taxon>Pseudomonadota</taxon>
        <taxon>Gammaproteobacteria</taxon>
        <taxon>Lysobacterales</taxon>
        <taxon>Lysobacteraceae</taxon>
        <taxon>Xanthomonas</taxon>
    </lineage>
</organism>
<gene>
    <name evidence="1" type="primary">rplV</name>
    <name type="ordered locus">XAC0977</name>
</gene>
<accession>Q8NKY0</accession>
<sequence length="113" mass="12305">MTMEAKAILRTARISPQKARLVADQVRGLSAERAVNLLKFSDKKAAHLIKKVVESAIANAENNQGADVDELKVKTIMVDEGPSLKRFMARAKGRGTRILKRTSHITVVVGAAK</sequence>
<feature type="chain" id="PRO_0000125265" description="Large ribosomal subunit protein uL22">
    <location>
        <begin position="1"/>
        <end position="113"/>
    </location>
</feature>
<comment type="function">
    <text evidence="1">This protein binds specifically to 23S rRNA; its binding is stimulated by other ribosomal proteins, e.g. L4, L17, and L20. It is important during the early stages of 50S assembly. It makes multiple contacts with different domains of the 23S rRNA in the assembled 50S subunit and ribosome (By similarity).</text>
</comment>
<comment type="function">
    <text evidence="1">The globular domain of the protein is located near the polypeptide exit tunnel on the outside of the subunit, while an extended beta-hairpin is found that lines the wall of the exit tunnel in the center of the 70S ribosome.</text>
</comment>
<comment type="subunit">
    <text evidence="1">Part of the 50S ribosomal subunit.</text>
</comment>
<comment type="similarity">
    <text evidence="1">Belongs to the universal ribosomal protein uL22 family.</text>
</comment>
<reference key="1">
    <citation type="journal article" date="2002" name="Nature">
        <title>Comparison of the genomes of two Xanthomonas pathogens with differing host specificities.</title>
        <authorList>
            <person name="da Silva A.C.R."/>
            <person name="Ferro J.A."/>
            <person name="Reinach F.C."/>
            <person name="Farah C.S."/>
            <person name="Furlan L.R."/>
            <person name="Quaggio R.B."/>
            <person name="Monteiro-Vitorello C.B."/>
            <person name="Van Sluys M.A."/>
            <person name="Almeida N.F. Jr."/>
            <person name="Alves L.M.C."/>
            <person name="do Amaral A.M."/>
            <person name="Bertolini M.C."/>
            <person name="Camargo L.E.A."/>
            <person name="Camarotte G."/>
            <person name="Cannavan F."/>
            <person name="Cardozo J."/>
            <person name="Chambergo F."/>
            <person name="Ciapina L.P."/>
            <person name="Cicarelli R.M.B."/>
            <person name="Coutinho L.L."/>
            <person name="Cursino-Santos J.R."/>
            <person name="El-Dorry H."/>
            <person name="Faria J.B."/>
            <person name="Ferreira A.J.S."/>
            <person name="Ferreira R.C.C."/>
            <person name="Ferro M.I.T."/>
            <person name="Formighieri E.F."/>
            <person name="Franco M.C."/>
            <person name="Greggio C.C."/>
            <person name="Gruber A."/>
            <person name="Katsuyama A.M."/>
            <person name="Kishi L.T."/>
            <person name="Leite R.P."/>
            <person name="Lemos E.G.M."/>
            <person name="Lemos M.V.F."/>
            <person name="Locali E.C."/>
            <person name="Machado M.A."/>
            <person name="Madeira A.M.B.N."/>
            <person name="Martinez-Rossi N.M."/>
            <person name="Martins E.C."/>
            <person name="Meidanis J."/>
            <person name="Menck C.F.M."/>
            <person name="Miyaki C.Y."/>
            <person name="Moon D.H."/>
            <person name="Moreira L.M."/>
            <person name="Novo M.T.M."/>
            <person name="Okura V.K."/>
            <person name="Oliveira M.C."/>
            <person name="Oliveira V.R."/>
            <person name="Pereira H.A."/>
            <person name="Rossi A."/>
            <person name="Sena J.A.D."/>
            <person name="Silva C."/>
            <person name="de Souza R.F."/>
            <person name="Spinola L.A.F."/>
            <person name="Takita M.A."/>
            <person name="Tamura R.E."/>
            <person name="Teixeira E.C."/>
            <person name="Tezza R.I.D."/>
            <person name="Trindade dos Santos M."/>
            <person name="Truffi D."/>
            <person name="Tsai S.M."/>
            <person name="White F.F."/>
            <person name="Setubal J.C."/>
            <person name="Kitajima J.P."/>
        </authorList>
    </citation>
    <scope>NUCLEOTIDE SEQUENCE [LARGE SCALE GENOMIC DNA]</scope>
    <source>
        <strain>306</strain>
    </source>
</reference>
<name>RL22_XANAC</name>
<dbReference type="EMBL" id="AE008923">
    <property type="protein sequence ID" value="AAM35860.1"/>
    <property type="molecule type" value="Genomic_DNA"/>
</dbReference>
<dbReference type="SMR" id="Q8NKY0"/>
<dbReference type="KEGG" id="xac:XAC0977"/>
<dbReference type="eggNOG" id="COG0091">
    <property type="taxonomic scope" value="Bacteria"/>
</dbReference>
<dbReference type="HOGENOM" id="CLU_083987_3_3_6"/>
<dbReference type="Proteomes" id="UP000000576">
    <property type="component" value="Chromosome"/>
</dbReference>
<dbReference type="GO" id="GO:0022625">
    <property type="term" value="C:cytosolic large ribosomal subunit"/>
    <property type="evidence" value="ECO:0007669"/>
    <property type="project" value="TreeGrafter"/>
</dbReference>
<dbReference type="GO" id="GO:0019843">
    <property type="term" value="F:rRNA binding"/>
    <property type="evidence" value="ECO:0007669"/>
    <property type="project" value="UniProtKB-UniRule"/>
</dbReference>
<dbReference type="GO" id="GO:0003735">
    <property type="term" value="F:structural constituent of ribosome"/>
    <property type="evidence" value="ECO:0007669"/>
    <property type="project" value="InterPro"/>
</dbReference>
<dbReference type="GO" id="GO:0006412">
    <property type="term" value="P:translation"/>
    <property type="evidence" value="ECO:0007669"/>
    <property type="project" value="UniProtKB-UniRule"/>
</dbReference>
<dbReference type="CDD" id="cd00336">
    <property type="entry name" value="Ribosomal_L22"/>
    <property type="match status" value="1"/>
</dbReference>
<dbReference type="FunFam" id="3.90.470.10:FF:000001">
    <property type="entry name" value="50S ribosomal protein L22"/>
    <property type="match status" value="1"/>
</dbReference>
<dbReference type="Gene3D" id="3.90.470.10">
    <property type="entry name" value="Ribosomal protein L22/L17"/>
    <property type="match status" value="1"/>
</dbReference>
<dbReference type="HAMAP" id="MF_01331_B">
    <property type="entry name" value="Ribosomal_uL22_B"/>
    <property type="match status" value="1"/>
</dbReference>
<dbReference type="InterPro" id="IPR001063">
    <property type="entry name" value="Ribosomal_uL22"/>
</dbReference>
<dbReference type="InterPro" id="IPR005727">
    <property type="entry name" value="Ribosomal_uL22_bac/chlpt-type"/>
</dbReference>
<dbReference type="InterPro" id="IPR047867">
    <property type="entry name" value="Ribosomal_uL22_bac/org-type"/>
</dbReference>
<dbReference type="InterPro" id="IPR018260">
    <property type="entry name" value="Ribosomal_uL22_CS"/>
</dbReference>
<dbReference type="InterPro" id="IPR036394">
    <property type="entry name" value="Ribosomal_uL22_sf"/>
</dbReference>
<dbReference type="NCBIfam" id="TIGR01044">
    <property type="entry name" value="rplV_bact"/>
    <property type="match status" value="1"/>
</dbReference>
<dbReference type="PANTHER" id="PTHR13501">
    <property type="entry name" value="CHLOROPLAST 50S RIBOSOMAL PROTEIN L22-RELATED"/>
    <property type="match status" value="1"/>
</dbReference>
<dbReference type="PANTHER" id="PTHR13501:SF8">
    <property type="entry name" value="LARGE RIBOSOMAL SUBUNIT PROTEIN UL22M"/>
    <property type="match status" value="1"/>
</dbReference>
<dbReference type="Pfam" id="PF00237">
    <property type="entry name" value="Ribosomal_L22"/>
    <property type="match status" value="1"/>
</dbReference>
<dbReference type="SUPFAM" id="SSF54843">
    <property type="entry name" value="Ribosomal protein L22"/>
    <property type="match status" value="1"/>
</dbReference>
<dbReference type="PROSITE" id="PS00464">
    <property type="entry name" value="RIBOSOMAL_L22"/>
    <property type="match status" value="1"/>
</dbReference>
<proteinExistence type="inferred from homology"/>
<evidence type="ECO:0000255" key="1">
    <source>
        <dbReference type="HAMAP-Rule" id="MF_01331"/>
    </source>
</evidence>
<evidence type="ECO:0000305" key="2"/>
<keyword id="KW-0687">Ribonucleoprotein</keyword>
<keyword id="KW-0689">Ribosomal protein</keyword>
<keyword id="KW-0694">RNA-binding</keyword>
<keyword id="KW-0699">rRNA-binding</keyword>